<dbReference type="EMBL" id="X83681">
    <property type="protein sequence ID" value="CAA58652.1"/>
    <property type="molecule type" value="mRNA"/>
</dbReference>
<dbReference type="PIR" id="S60044">
    <property type="entry name" value="S60044"/>
</dbReference>
<dbReference type="SMR" id="Q41705"/>
<dbReference type="GO" id="GO:0009877">
    <property type="term" value="P:nodulation"/>
    <property type="evidence" value="ECO:0007669"/>
    <property type="project" value="UniProtKB-KW"/>
</dbReference>
<reference key="1">
    <citation type="journal article" date="1995" name="Plant Mol. Biol.">
        <title>VsENOD5, VsENOD12 and VsENOD40 expression during Rhizobium-induced nodule formation on Vicia sativa roots.</title>
        <authorList>
            <person name="Vijn I."/>
            <person name="Yang W.-C."/>
            <person name="Pallisgaard N."/>
            <person name="Oestergaard Jensen E."/>
            <person name="van Kammen A."/>
            <person name="Bisseling T."/>
        </authorList>
    </citation>
    <scope>NUCLEOTIDE SEQUENCE [MRNA]</scope>
    <source>
        <strain>cv. Nigra</strain>
        <tissue>Root nodule</tissue>
    </source>
</reference>
<name>NO5_VICSA</name>
<accession>Q41705</accession>
<protein>
    <recommendedName>
        <fullName>Early nodulin-5</fullName>
        <shortName>N-5</shortName>
    </recommendedName>
</protein>
<organism>
    <name type="scientific">Vicia sativa</name>
    <name type="common">Spring vetch</name>
    <name type="synonym">Tare</name>
    <dbReference type="NCBI Taxonomy" id="3908"/>
    <lineage>
        <taxon>Eukaryota</taxon>
        <taxon>Viridiplantae</taxon>
        <taxon>Streptophyta</taxon>
        <taxon>Embryophyta</taxon>
        <taxon>Tracheophyta</taxon>
        <taxon>Spermatophyta</taxon>
        <taxon>Magnoliopsida</taxon>
        <taxon>eudicotyledons</taxon>
        <taxon>Gunneridae</taxon>
        <taxon>Pentapetalae</taxon>
        <taxon>rosids</taxon>
        <taxon>fabids</taxon>
        <taxon>Fabales</taxon>
        <taxon>Fabaceae</taxon>
        <taxon>Papilionoideae</taxon>
        <taxon>50 kb inversion clade</taxon>
        <taxon>NPAAA clade</taxon>
        <taxon>Hologalegina</taxon>
        <taxon>IRL clade</taxon>
        <taxon>Fabeae</taxon>
        <taxon>Vicia</taxon>
    </lineage>
</organism>
<evidence type="ECO:0000255" key="1"/>
<comment type="function">
    <text>Involved in the infection process during the plant-rhizobium interaction.</text>
</comment>
<comment type="developmental stage">
    <text>Expressed during Rhizobium-induced nodule formation. In 4-day old nodules it is found in a small cluster of cells in the primordium, and in this cluster infection threads are present. At day 5, expression is seen in the complete central tissue. At day 20 expressed in the complete prefixation zone II where it is only active in the infected cells, and maximal accumulation occurs in the proximal part of this zone. Levels decrease to a lower level from one cell layer to another at the transition of prefixation zone into interzone II-III and remains at this reduced level in the fixation zone III.</text>
</comment>
<sequence>IIFSMWLLFSFSESTEYIAGDSESSWKVNFPSREALIDWATRHQFTYSDTVVNEDEDHDCNTKIHSKLGDMVVTKRPLVLPPLITLPLSPSPAPAPNTSGAAAGCGFMAFLEVSVAMLMFLIWL</sequence>
<gene>
    <name type="primary">ENOD5</name>
</gene>
<feature type="signal peptide" evidence="1">
    <location>
        <begin position="1" status="less than"/>
        <end position="12"/>
    </location>
</feature>
<feature type="chain" id="PRO_0000002875" description="Early nodulin-5">
    <location>
        <begin position="13"/>
        <end position="124"/>
    </location>
</feature>
<feature type="domain" description="Plastocyanin-like">
    <location>
        <begin position="13"/>
        <end status="unknown"/>
    </location>
</feature>
<feature type="non-terminal residue">
    <location>
        <position position="1"/>
    </location>
</feature>
<proteinExistence type="evidence at transcript level"/>
<keyword id="KW-0536">Nodulation</keyword>
<keyword id="KW-0732">Signal</keyword>